<accession>Q914J9</accession>
<proteinExistence type="predicted"/>
<feature type="chain" id="PRO_0000385400" description="Uncharacterized protein 31">
    <location>
        <begin position="1"/>
        <end position="65"/>
    </location>
</feature>
<keyword id="KW-1185">Reference proteome</keyword>
<reference key="1">
    <citation type="journal article" date="2000" name="Virology">
        <title>A novel lipothrixvirus, SIFV, of the extremely thermophilic crenarchaeon Sulfolobus.</title>
        <authorList>
            <person name="Arnold H.P."/>
            <person name="Zillig W."/>
            <person name="Ziese U."/>
            <person name="Holz I."/>
            <person name="Crosby M."/>
            <person name="Utterback T."/>
            <person name="Weidmann J.F."/>
            <person name="Umayam L.A."/>
            <person name="Teffera K."/>
            <person name="Kristjanson J.K."/>
            <person name="Klenk H.P."/>
            <person name="Nelson K.E."/>
            <person name="Fraser C.M."/>
        </authorList>
    </citation>
    <scope>NUCLEOTIDE SEQUENCE [GENOMIC DNA]</scope>
</reference>
<gene>
    <name type="primary">SIFV0031</name>
</gene>
<dbReference type="EMBL" id="AF440571">
    <property type="protein sequence ID" value="AAL27742.1"/>
    <property type="molecule type" value="Genomic_DNA"/>
</dbReference>
<dbReference type="RefSeq" id="NP_445696.1">
    <property type="nucleotide sequence ID" value="NC_003214.2"/>
</dbReference>
<dbReference type="GeneID" id="922287"/>
<dbReference type="KEGG" id="vg:922287"/>
<dbReference type="Proteomes" id="UP000007017">
    <property type="component" value="Segment"/>
</dbReference>
<protein>
    <recommendedName>
        <fullName>Uncharacterized protein 31</fullName>
    </recommendedName>
</protein>
<name>Y031_SIFVH</name>
<sequence length="65" mass="7616">MRITEEGWAGEGKILVRYAIVEEIPGKLYHVVCPSLRFFEYCFDLNQCRKIALSLSEKVKDFLYV</sequence>
<organismHost>
    <name type="scientific">Saccharolobus islandicus</name>
    <name type="common">Sulfolobus islandicus</name>
    <dbReference type="NCBI Taxonomy" id="43080"/>
</organismHost>
<organism>
    <name type="scientific">Sulfolobus islandicus filamentous virus (isolate Iceland/Hveragerdi)</name>
    <name type="common">SIFV</name>
    <dbReference type="NCBI Taxonomy" id="654908"/>
    <lineage>
        <taxon>Viruses</taxon>
        <taxon>Adnaviria</taxon>
        <taxon>Zilligvirae</taxon>
        <taxon>Taleaviricota</taxon>
        <taxon>Tokiviricetes</taxon>
        <taxon>Ligamenvirales</taxon>
        <taxon>Lipothrixviridae</taxon>
        <taxon>Betalipothrixvirus</taxon>
        <taxon>Sulfolobus islandicus filamentous virus</taxon>
    </lineage>
</organism>